<accession>O14123</accession>
<sequence length="759" mass="85487">MAWSQVEISKPHLAYAIIGGFTSLFMLCSLIIKEKLFLGEATMATATGLIFGPYVAKLFVPTSWGNTDYITEELARVLLVVEVFAAGAELPRAYMLRHWRSMFVMLLPVMIFGWLVSTGFMYALIPRLSFLESLAIAACITATDPVLASSIVGKGKFARRVPGHLRNMLLAESGCNDGMAIPFLYLAIYLIIEKPARHAGRDWVCIIILYECTFGCVLGAIIGVIARKMIKFSERRGLMDRESFLVFYFVLALFCGGIGTIIGVDDLLVSFCAGAAFSWDSWFSKKTEESHVSNVIDLLLNLSFFVYVGAIMPWPQFHMPHMDLSVWRLVVLAICILIARRIPAVLLFKSFVPDIINWREALFAGHFGPIGVGALYTCLVARAELEVHSTVPEPNDAIENPEIPNWYCIQVMWPVVCFLVLSSIIVHGSSIAFFMLGKRINTLALSFTRTRDSHFAFNLPRVRQGQSLPIKRVDALRSSANSIASSIRRRHPVNIQEDEDADISTVSLPEAAHLREERAESPRGGHYDAEEFPSEDYESRQPRRSNEEDREEEMNPGDETYLIGEDLVVEDSQGNIISHTSSRDANGPSIDEKLAQGDPKAKSFGRKFRSFLRRSYDTFQRNLHEPDDERQREPTLGHIESSIENHRPRYSRQNSESHLRENSVERRRREQVLTNIGDSESEDDNIPRPGIVPFYNENNESSSDTRNGLLSDNVSESRSRRPSRAPSAAVSSEGSPVEEDNEAQHRPNIRFLELTRAWE</sequence>
<name>NAH2_SCHPO</name>
<organism>
    <name type="scientific">Schizosaccharomyces pombe (strain 972 / ATCC 24843)</name>
    <name type="common">Fission yeast</name>
    <dbReference type="NCBI Taxonomy" id="284812"/>
    <lineage>
        <taxon>Eukaryota</taxon>
        <taxon>Fungi</taxon>
        <taxon>Dikarya</taxon>
        <taxon>Ascomycota</taxon>
        <taxon>Taphrinomycotina</taxon>
        <taxon>Schizosaccharomycetes</taxon>
        <taxon>Schizosaccharomycetales</taxon>
        <taxon>Schizosaccharomycetaceae</taxon>
        <taxon>Schizosaccharomyces</taxon>
    </lineage>
</organism>
<comment type="function">
    <text evidence="1">Sodium export from cell, takes up external protons in exchange for internal sodium ions.</text>
</comment>
<comment type="subcellular location">
    <subcellularLocation>
        <location evidence="5">Membrane</location>
        <topology evidence="5">Multi-pass membrane protein</topology>
    </subcellularLocation>
</comment>
<comment type="similarity">
    <text evidence="5">Belongs to the fungal Na(+)/H(+) exchanger family.</text>
</comment>
<protein>
    <recommendedName>
        <fullName>Probable Na(+)/H(+) antiporter C3A11.09</fullName>
    </recommendedName>
</protein>
<reference key="1">
    <citation type="journal article" date="2002" name="Nature">
        <title>The genome sequence of Schizosaccharomyces pombe.</title>
        <authorList>
            <person name="Wood V."/>
            <person name="Gwilliam R."/>
            <person name="Rajandream M.A."/>
            <person name="Lyne M.H."/>
            <person name="Lyne R."/>
            <person name="Stewart A."/>
            <person name="Sgouros J.G."/>
            <person name="Peat N."/>
            <person name="Hayles J."/>
            <person name="Baker S.G."/>
            <person name="Basham D."/>
            <person name="Bowman S."/>
            <person name="Brooks K."/>
            <person name="Brown D."/>
            <person name="Brown S."/>
            <person name="Chillingworth T."/>
            <person name="Churcher C.M."/>
            <person name="Collins M."/>
            <person name="Connor R."/>
            <person name="Cronin A."/>
            <person name="Davis P."/>
            <person name="Feltwell T."/>
            <person name="Fraser A."/>
            <person name="Gentles S."/>
            <person name="Goble A."/>
            <person name="Hamlin N."/>
            <person name="Harris D.E."/>
            <person name="Hidalgo J."/>
            <person name="Hodgson G."/>
            <person name="Holroyd S."/>
            <person name="Hornsby T."/>
            <person name="Howarth S."/>
            <person name="Huckle E.J."/>
            <person name="Hunt S."/>
            <person name="Jagels K."/>
            <person name="James K.D."/>
            <person name="Jones L."/>
            <person name="Jones M."/>
            <person name="Leather S."/>
            <person name="McDonald S."/>
            <person name="McLean J."/>
            <person name="Mooney P."/>
            <person name="Moule S."/>
            <person name="Mungall K.L."/>
            <person name="Murphy L.D."/>
            <person name="Niblett D."/>
            <person name="Odell C."/>
            <person name="Oliver K."/>
            <person name="O'Neil S."/>
            <person name="Pearson D."/>
            <person name="Quail M.A."/>
            <person name="Rabbinowitsch E."/>
            <person name="Rutherford K.M."/>
            <person name="Rutter S."/>
            <person name="Saunders D."/>
            <person name="Seeger K."/>
            <person name="Sharp S."/>
            <person name="Skelton J."/>
            <person name="Simmonds M.N."/>
            <person name="Squares R."/>
            <person name="Squares S."/>
            <person name="Stevens K."/>
            <person name="Taylor K."/>
            <person name="Taylor R.G."/>
            <person name="Tivey A."/>
            <person name="Walsh S.V."/>
            <person name="Warren T."/>
            <person name="Whitehead S."/>
            <person name="Woodward J.R."/>
            <person name="Volckaert G."/>
            <person name="Aert R."/>
            <person name="Robben J."/>
            <person name="Grymonprez B."/>
            <person name="Weltjens I."/>
            <person name="Vanstreels E."/>
            <person name="Rieger M."/>
            <person name="Schaefer M."/>
            <person name="Mueller-Auer S."/>
            <person name="Gabel C."/>
            <person name="Fuchs M."/>
            <person name="Duesterhoeft A."/>
            <person name="Fritzc C."/>
            <person name="Holzer E."/>
            <person name="Moestl D."/>
            <person name="Hilbert H."/>
            <person name="Borzym K."/>
            <person name="Langer I."/>
            <person name="Beck A."/>
            <person name="Lehrach H."/>
            <person name="Reinhardt R."/>
            <person name="Pohl T.M."/>
            <person name="Eger P."/>
            <person name="Zimmermann W."/>
            <person name="Wedler H."/>
            <person name="Wambutt R."/>
            <person name="Purnelle B."/>
            <person name="Goffeau A."/>
            <person name="Cadieu E."/>
            <person name="Dreano S."/>
            <person name="Gloux S."/>
            <person name="Lelaure V."/>
            <person name="Mottier S."/>
            <person name="Galibert F."/>
            <person name="Aves S.J."/>
            <person name="Xiang Z."/>
            <person name="Hunt C."/>
            <person name="Moore K."/>
            <person name="Hurst S.M."/>
            <person name="Lucas M."/>
            <person name="Rochet M."/>
            <person name="Gaillardin C."/>
            <person name="Tallada V.A."/>
            <person name="Garzon A."/>
            <person name="Thode G."/>
            <person name="Daga R.R."/>
            <person name="Cruzado L."/>
            <person name="Jimenez J."/>
            <person name="Sanchez M."/>
            <person name="del Rey F."/>
            <person name="Benito J."/>
            <person name="Dominguez A."/>
            <person name="Revuelta J.L."/>
            <person name="Moreno S."/>
            <person name="Armstrong J."/>
            <person name="Forsburg S.L."/>
            <person name="Cerutti L."/>
            <person name="Lowe T."/>
            <person name="McCombie W.R."/>
            <person name="Paulsen I."/>
            <person name="Potashkin J."/>
            <person name="Shpakovski G.V."/>
            <person name="Ussery D."/>
            <person name="Barrell B.G."/>
            <person name="Nurse P."/>
        </authorList>
    </citation>
    <scope>NUCLEOTIDE SEQUENCE [LARGE SCALE GENOMIC DNA]</scope>
    <source>
        <strain>972 / ATCC 24843</strain>
    </source>
</reference>
<reference key="2">
    <citation type="journal article" date="2008" name="J. Proteome Res.">
        <title>Phosphoproteome analysis of fission yeast.</title>
        <authorList>
            <person name="Wilson-Grady J.T."/>
            <person name="Villen J."/>
            <person name="Gygi S.P."/>
        </authorList>
    </citation>
    <scope>PHOSPHORYLATION [LARGE SCALE ANALYSIS] AT THR-442; SER-446; THR-448 AND SER-735</scope>
    <scope>IDENTIFICATION BY MASS SPECTROMETRY</scope>
</reference>
<proteinExistence type="evidence at protein level"/>
<keyword id="KW-0050">Antiport</keyword>
<keyword id="KW-0325">Glycoprotein</keyword>
<keyword id="KW-0406">Ion transport</keyword>
<keyword id="KW-0472">Membrane</keyword>
<keyword id="KW-0597">Phosphoprotein</keyword>
<keyword id="KW-1185">Reference proteome</keyword>
<keyword id="KW-0915">Sodium</keyword>
<keyword id="KW-0739">Sodium transport</keyword>
<keyword id="KW-0812">Transmembrane</keyword>
<keyword id="KW-1133">Transmembrane helix</keyword>
<keyword id="KW-0813">Transport</keyword>
<gene>
    <name type="primary">sod22</name>
    <name type="ORF">SPAC3A11.09</name>
</gene>
<feature type="chain" id="PRO_0000052406" description="Probable Na(+)/H(+) antiporter C3A11.09">
    <location>
        <begin position="1"/>
        <end position="759"/>
    </location>
</feature>
<feature type="transmembrane region" description="Helical" evidence="2">
    <location>
        <begin position="12"/>
        <end position="32"/>
    </location>
</feature>
<feature type="transmembrane region" description="Helical" evidence="2">
    <location>
        <begin position="36"/>
        <end position="56"/>
    </location>
</feature>
<feature type="transmembrane region" description="Helical" evidence="2">
    <location>
        <begin position="105"/>
        <end position="125"/>
    </location>
</feature>
<feature type="transmembrane region" description="Helical" evidence="2">
    <location>
        <begin position="133"/>
        <end position="153"/>
    </location>
</feature>
<feature type="transmembrane region" description="Helical" evidence="2">
    <location>
        <begin position="172"/>
        <end position="192"/>
    </location>
</feature>
<feature type="transmembrane region" description="Helical" evidence="2">
    <location>
        <begin position="206"/>
        <end position="226"/>
    </location>
</feature>
<feature type="transmembrane region" description="Helical" evidence="2">
    <location>
        <begin position="244"/>
        <end position="264"/>
    </location>
</feature>
<feature type="transmembrane region" description="Helical" evidence="2">
    <location>
        <begin position="295"/>
        <end position="315"/>
    </location>
</feature>
<feature type="transmembrane region" description="Helical" evidence="2">
    <location>
        <begin position="319"/>
        <end position="339"/>
    </location>
</feature>
<feature type="transmembrane region" description="Helical" evidence="2">
    <location>
        <begin position="361"/>
        <end position="381"/>
    </location>
</feature>
<feature type="transmembrane region" description="Helical" evidence="2">
    <location>
        <begin position="415"/>
        <end position="435"/>
    </location>
</feature>
<feature type="region of interest" description="Disordered" evidence="3">
    <location>
        <begin position="514"/>
        <end position="558"/>
    </location>
</feature>
<feature type="region of interest" description="Disordered" evidence="3">
    <location>
        <begin position="578"/>
        <end position="606"/>
    </location>
</feature>
<feature type="region of interest" description="Disordered" evidence="3">
    <location>
        <begin position="622"/>
        <end position="759"/>
    </location>
</feature>
<feature type="compositionally biased region" description="Basic and acidic residues" evidence="3">
    <location>
        <begin position="514"/>
        <end position="529"/>
    </location>
</feature>
<feature type="compositionally biased region" description="Basic and acidic residues" evidence="3">
    <location>
        <begin position="537"/>
        <end position="547"/>
    </location>
</feature>
<feature type="compositionally biased region" description="Basic and acidic residues" evidence="3">
    <location>
        <begin position="590"/>
        <end position="601"/>
    </location>
</feature>
<feature type="compositionally biased region" description="Basic and acidic residues" evidence="3">
    <location>
        <begin position="622"/>
        <end position="647"/>
    </location>
</feature>
<feature type="compositionally biased region" description="Basic and acidic residues" evidence="3">
    <location>
        <begin position="655"/>
        <end position="671"/>
    </location>
</feature>
<feature type="compositionally biased region" description="Polar residues" evidence="3">
    <location>
        <begin position="696"/>
        <end position="713"/>
    </location>
</feature>
<feature type="compositionally biased region" description="Low complexity" evidence="3">
    <location>
        <begin position="724"/>
        <end position="733"/>
    </location>
</feature>
<feature type="modified residue" description="Phosphothreonine" evidence="4">
    <location>
        <position position="442"/>
    </location>
</feature>
<feature type="modified residue" description="Phosphoserine" evidence="4">
    <location>
        <position position="446"/>
    </location>
</feature>
<feature type="modified residue" description="Phosphothreonine" evidence="4">
    <location>
        <position position="448"/>
    </location>
</feature>
<feature type="modified residue" description="Phosphoserine" evidence="4">
    <location>
        <position position="735"/>
    </location>
</feature>
<feature type="glycosylation site" description="N-linked (GlcNAc...) asparagine" evidence="2">
    <location>
        <position position="699"/>
    </location>
</feature>
<feature type="glycosylation site" description="N-linked (GlcNAc...) asparagine" evidence="2">
    <location>
        <position position="713"/>
    </location>
</feature>
<dbReference type="EMBL" id="CU329670">
    <property type="protein sequence ID" value="CAB16384.1"/>
    <property type="molecule type" value="Genomic_DNA"/>
</dbReference>
<dbReference type="PIR" id="T11631">
    <property type="entry name" value="T11631"/>
</dbReference>
<dbReference type="RefSeq" id="NP_594194.1">
    <property type="nucleotide sequence ID" value="NM_001019618.2"/>
</dbReference>
<dbReference type="SMR" id="O14123"/>
<dbReference type="BioGRID" id="278967">
    <property type="interactions" value="3"/>
</dbReference>
<dbReference type="FunCoup" id="O14123">
    <property type="interactions" value="93"/>
</dbReference>
<dbReference type="TCDB" id="2.A.36.4.5">
    <property type="family name" value="the monovalent cation:proton antiporter-1 (cpa1) family"/>
</dbReference>
<dbReference type="GlyCosmos" id="O14123">
    <property type="glycosylation" value="2 sites, No reported glycans"/>
</dbReference>
<dbReference type="iPTMnet" id="O14123"/>
<dbReference type="PaxDb" id="4896-SPAC3A11.09.1"/>
<dbReference type="EnsemblFungi" id="SPAC3A11.09.1">
    <property type="protein sequence ID" value="SPAC3A11.09.1:pep"/>
    <property type="gene ID" value="SPAC3A11.09"/>
</dbReference>
<dbReference type="GeneID" id="2542509"/>
<dbReference type="KEGG" id="spo:2542509"/>
<dbReference type="PomBase" id="SPAC3A11.09">
    <property type="gene designation" value="sod22"/>
</dbReference>
<dbReference type="VEuPathDB" id="FungiDB:SPAC3A11.09"/>
<dbReference type="eggNOG" id="KOG4505">
    <property type="taxonomic scope" value="Eukaryota"/>
</dbReference>
<dbReference type="HOGENOM" id="CLU_008635_0_1_1"/>
<dbReference type="InParanoid" id="O14123"/>
<dbReference type="OMA" id="INWREAL"/>
<dbReference type="PhylomeDB" id="O14123"/>
<dbReference type="PRO" id="PR:O14123"/>
<dbReference type="Proteomes" id="UP000002485">
    <property type="component" value="Chromosome I"/>
</dbReference>
<dbReference type="GO" id="GO:0005886">
    <property type="term" value="C:plasma membrane"/>
    <property type="evidence" value="ECO:0000318"/>
    <property type="project" value="GO_Central"/>
</dbReference>
<dbReference type="GO" id="GO:0015385">
    <property type="term" value="F:sodium:proton antiporter activity"/>
    <property type="evidence" value="ECO:0000318"/>
    <property type="project" value="GO_Central"/>
</dbReference>
<dbReference type="GO" id="GO:0030007">
    <property type="term" value="P:intracellular potassium ion homeostasis"/>
    <property type="evidence" value="ECO:0000318"/>
    <property type="project" value="GO_Central"/>
</dbReference>
<dbReference type="GO" id="GO:0120029">
    <property type="term" value="P:proton export across plasma membrane"/>
    <property type="evidence" value="ECO:0007669"/>
    <property type="project" value="InterPro"/>
</dbReference>
<dbReference type="GO" id="GO:0042391">
    <property type="term" value="P:regulation of membrane potential"/>
    <property type="evidence" value="ECO:0007669"/>
    <property type="project" value="InterPro"/>
</dbReference>
<dbReference type="GO" id="GO:0036376">
    <property type="term" value="P:sodium ion export across plasma membrane"/>
    <property type="evidence" value="ECO:0000305"/>
    <property type="project" value="PomBase"/>
</dbReference>
<dbReference type="GO" id="GO:0035725">
    <property type="term" value="P:sodium ion transmembrane transport"/>
    <property type="evidence" value="ECO:0000318"/>
    <property type="project" value="GO_Central"/>
</dbReference>
<dbReference type="FunFam" id="1.20.1530.20:FF:000015">
    <property type="entry name" value="Na(+)/H(+) antiporter 2"/>
    <property type="match status" value="1"/>
</dbReference>
<dbReference type="Gene3D" id="1.20.1530.20">
    <property type="match status" value="1"/>
</dbReference>
<dbReference type="InterPro" id="IPR006153">
    <property type="entry name" value="Cation/H_exchanger_TM"/>
</dbReference>
<dbReference type="InterPro" id="IPR004712">
    <property type="entry name" value="Na+/H+_antiporter_fungi"/>
</dbReference>
<dbReference type="InterPro" id="IPR038770">
    <property type="entry name" value="Na+/solute_symporter_sf"/>
</dbReference>
<dbReference type="PANTHER" id="PTHR31382">
    <property type="entry name" value="NA(+)/H(+) ANTIPORTER"/>
    <property type="match status" value="1"/>
</dbReference>
<dbReference type="PANTHER" id="PTHR31382:SF4">
    <property type="entry name" value="NA(+)_H(+) ANTIPORTER"/>
    <property type="match status" value="1"/>
</dbReference>
<dbReference type="Pfam" id="PF00999">
    <property type="entry name" value="Na_H_Exchanger"/>
    <property type="match status" value="1"/>
</dbReference>
<evidence type="ECO:0000250" key="1"/>
<evidence type="ECO:0000255" key="2"/>
<evidence type="ECO:0000256" key="3">
    <source>
        <dbReference type="SAM" id="MobiDB-lite"/>
    </source>
</evidence>
<evidence type="ECO:0000269" key="4">
    <source>
    </source>
</evidence>
<evidence type="ECO:0000305" key="5"/>